<gene>
    <name type="primary">Pgi</name>
    <name type="ORF">CG8251</name>
</gene>
<protein>
    <recommendedName>
        <fullName>Glucose-6-phosphate isomerase</fullName>
        <shortName>GPI</shortName>
        <ecNumber>5.3.1.9</ecNumber>
    </recommendedName>
    <alternativeName>
        <fullName>Phosphoglucose isomerase</fullName>
        <shortName>PGI</shortName>
    </alternativeName>
    <alternativeName>
        <fullName>Phosphohexose isomerase</fullName>
        <shortName>PHI</shortName>
    </alternativeName>
</protein>
<keyword id="KW-0963">Cytoplasm</keyword>
<keyword id="KW-0312">Gluconeogenesis</keyword>
<keyword id="KW-0324">Glycolysis</keyword>
<keyword id="KW-0413">Isomerase</keyword>
<keyword id="KW-1185">Reference proteome</keyword>
<feature type="chain" id="PRO_0000180543" description="Glucose-6-phosphate isomerase">
    <location>
        <begin position="1"/>
        <end position="558"/>
    </location>
</feature>
<feature type="active site" description="Proton donor" evidence="1">
    <location>
        <position position="362"/>
    </location>
</feature>
<feature type="active site" evidence="1">
    <location>
        <position position="393"/>
    </location>
</feature>
<feature type="active site" evidence="1">
    <location>
        <position position="523"/>
    </location>
</feature>
<feature type="sequence variant" description="In strain: LW15." evidence="2">
    <original>H</original>
    <variation>Y</variation>
    <location>
        <position position="184"/>
    </location>
</feature>
<feature type="sequence variant" description="In strain: AF-F, F1-F, F1-1S, JA-F, LW8, MW18 and ZW20." evidence="2">
    <original>V</original>
    <variation>I</variation>
    <location>
        <position position="329"/>
    </location>
</feature>
<feature type="sequence variant" description="In strain: JA-S." evidence="2">
    <original>V</original>
    <variation>A</variation>
    <location>
        <position position="471"/>
    </location>
</feature>
<organism>
    <name type="scientific">Drosophila melanogaster</name>
    <name type="common">Fruit fly</name>
    <dbReference type="NCBI Taxonomy" id="7227"/>
    <lineage>
        <taxon>Eukaryota</taxon>
        <taxon>Metazoa</taxon>
        <taxon>Ecdysozoa</taxon>
        <taxon>Arthropoda</taxon>
        <taxon>Hexapoda</taxon>
        <taxon>Insecta</taxon>
        <taxon>Pterygota</taxon>
        <taxon>Neoptera</taxon>
        <taxon>Endopterygota</taxon>
        <taxon>Diptera</taxon>
        <taxon>Brachycera</taxon>
        <taxon>Muscomorpha</taxon>
        <taxon>Ephydroidea</taxon>
        <taxon>Drosophilidae</taxon>
        <taxon>Drosophila</taxon>
        <taxon>Sophophora</taxon>
    </lineage>
</organism>
<name>G6PI_DROME</name>
<evidence type="ECO:0000250" key="1"/>
<evidence type="ECO:0000269" key="2">
    <source ref="1"/>
</evidence>
<evidence type="ECO:0000305" key="3"/>
<dbReference type="EC" id="5.3.1.9"/>
<dbReference type="EMBL" id="L27539">
    <property type="protein sequence ID" value="AAA28789.1"/>
    <property type="molecule type" value="Genomic_DNA"/>
</dbReference>
<dbReference type="EMBL" id="L27540">
    <property type="protein sequence ID" value="AAA28790.1"/>
    <property type="molecule type" value="Genomic_DNA"/>
</dbReference>
<dbReference type="EMBL" id="L27541">
    <property type="protein sequence ID" value="AAA28791.1"/>
    <property type="molecule type" value="Genomic_DNA"/>
</dbReference>
<dbReference type="EMBL" id="L27542">
    <property type="protein sequence ID" value="AAA28792.1"/>
    <property type="molecule type" value="Genomic_DNA"/>
</dbReference>
<dbReference type="EMBL" id="L27543">
    <property type="protein sequence ID" value="AAA28793.1"/>
    <property type="molecule type" value="Genomic_DNA"/>
</dbReference>
<dbReference type="EMBL" id="L27544">
    <property type="protein sequence ID" value="AAA28794.1"/>
    <property type="molecule type" value="Genomic_DNA"/>
</dbReference>
<dbReference type="EMBL" id="L27545">
    <property type="protein sequence ID" value="AAA28795.1"/>
    <property type="molecule type" value="Genomic_DNA"/>
</dbReference>
<dbReference type="EMBL" id="L27546">
    <property type="protein sequence ID" value="AAA28796.1"/>
    <property type="molecule type" value="Genomic_DNA"/>
</dbReference>
<dbReference type="EMBL" id="L27553">
    <property type="protein sequence ID" value="AAA28803.1"/>
    <property type="molecule type" value="Genomic_DNA"/>
</dbReference>
<dbReference type="EMBL" id="L27554">
    <property type="protein sequence ID" value="AAA28804.1"/>
    <property type="molecule type" value="Genomic_DNA"/>
</dbReference>
<dbReference type="EMBL" id="L27555">
    <property type="protein sequence ID" value="AAA28805.1"/>
    <property type="molecule type" value="Genomic_DNA"/>
</dbReference>
<dbReference type="EMBL" id="U20566">
    <property type="protein sequence ID" value="AAA63671.1"/>
    <property type="molecule type" value="Genomic_DNA"/>
</dbReference>
<dbReference type="EMBL" id="U20567">
    <property type="protein sequence ID" value="AAA63672.1"/>
    <property type="molecule type" value="Genomic_DNA"/>
</dbReference>
<dbReference type="EMBL" id="U20568">
    <property type="protein sequence ID" value="AAA63673.1"/>
    <property type="molecule type" value="Genomic_DNA"/>
</dbReference>
<dbReference type="EMBL" id="U20569">
    <property type="protein sequence ID" value="AAA63674.1"/>
    <property type="molecule type" value="Genomic_DNA"/>
</dbReference>
<dbReference type="EMBL" id="U20570">
    <property type="protein sequence ID" value="AAA63675.1"/>
    <property type="molecule type" value="Genomic_DNA"/>
</dbReference>
<dbReference type="EMBL" id="U20571">
    <property type="protein sequence ID" value="AAA63676.1"/>
    <property type="molecule type" value="Genomic_DNA"/>
</dbReference>
<dbReference type="EMBL" id="U20572">
    <property type="protein sequence ID" value="AAA63677.1"/>
    <property type="molecule type" value="Genomic_DNA"/>
</dbReference>
<dbReference type="EMBL" id="U20573">
    <property type="protein sequence ID" value="AAA63678.1"/>
    <property type="molecule type" value="Genomic_DNA"/>
</dbReference>
<dbReference type="EMBL" id="U20574">
    <property type="protein sequence ID" value="AAA63679.1"/>
    <property type="molecule type" value="Genomic_DNA"/>
</dbReference>
<dbReference type="EMBL" id="U20575">
    <property type="protein sequence ID" value="AAA63680.1"/>
    <property type="molecule type" value="Genomic_DNA"/>
</dbReference>
<dbReference type="EMBL" id="AE013599">
    <property type="protein sequence ID" value="AAF59025.1"/>
    <property type="molecule type" value="Genomic_DNA"/>
</dbReference>
<dbReference type="EMBL" id="AE013599">
    <property type="protein sequence ID" value="AAM71091.1"/>
    <property type="molecule type" value="Genomic_DNA"/>
</dbReference>
<dbReference type="EMBL" id="AY051468">
    <property type="protein sequence ID" value="AAK92892.1"/>
    <property type="molecule type" value="mRNA"/>
</dbReference>
<dbReference type="RefSeq" id="NP_523663.1">
    <property type="nucleotide sequence ID" value="NM_078939.3"/>
</dbReference>
<dbReference type="RefSeq" id="NP_724723.1">
    <property type="nucleotide sequence ID" value="NM_165635.2"/>
</dbReference>
<dbReference type="RefSeq" id="NP_724724.1">
    <property type="nucleotide sequence ID" value="NM_165636.2"/>
</dbReference>
<dbReference type="SMR" id="P52029"/>
<dbReference type="BioGRID" id="61725">
    <property type="interactions" value="7"/>
</dbReference>
<dbReference type="DIP" id="DIP-17637N"/>
<dbReference type="FunCoup" id="P52029">
    <property type="interactions" value="1412"/>
</dbReference>
<dbReference type="IntAct" id="P52029">
    <property type="interactions" value="8"/>
</dbReference>
<dbReference type="STRING" id="7227.FBpp0087760"/>
<dbReference type="PaxDb" id="7227-FBpp0087760"/>
<dbReference type="DNASU" id="35886"/>
<dbReference type="EnsemblMetazoa" id="FBtr0088679">
    <property type="protein sequence ID" value="FBpp0087760"/>
    <property type="gene ID" value="FBgn0003074"/>
</dbReference>
<dbReference type="EnsemblMetazoa" id="FBtr0088680">
    <property type="protein sequence ID" value="FBpp0087761"/>
    <property type="gene ID" value="FBgn0003074"/>
</dbReference>
<dbReference type="EnsemblMetazoa" id="FBtr0088681">
    <property type="protein sequence ID" value="FBpp0087762"/>
    <property type="gene ID" value="FBgn0003074"/>
</dbReference>
<dbReference type="GeneID" id="35886"/>
<dbReference type="KEGG" id="dme:Dmel_CG8251"/>
<dbReference type="AGR" id="FB:FBgn0003074"/>
<dbReference type="CTD" id="35886"/>
<dbReference type="FlyBase" id="FBgn0003074">
    <property type="gene designation" value="Pgi"/>
</dbReference>
<dbReference type="VEuPathDB" id="VectorBase:FBgn0003074"/>
<dbReference type="eggNOG" id="KOG2446">
    <property type="taxonomic scope" value="Eukaryota"/>
</dbReference>
<dbReference type="GeneTree" id="ENSGT00390000000707"/>
<dbReference type="HOGENOM" id="CLU_017947_3_1_1"/>
<dbReference type="InParanoid" id="P52029"/>
<dbReference type="OMA" id="DWYRQLW"/>
<dbReference type="OrthoDB" id="5831190at2759"/>
<dbReference type="PhylomeDB" id="P52029"/>
<dbReference type="Reactome" id="R-DME-5628897">
    <property type="pathway name" value="TP53 Regulates Metabolic Genes"/>
</dbReference>
<dbReference type="Reactome" id="R-DME-6798695">
    <property type="pathway name" value="Neutrophil degranulation"/>
</dbReference>
<dbReference type="Reactome" id="R-DME-70171">
    <property type="pathway name" value="Glycolysis"/>
</dbReference>
<dbReference type="Reactome" id="R-DME-70263">
    <property type="pathway name" value="Gluconeogenesis"/>
</dbReference>
<dbReference type="SignaLink" id="P52029"/>
<dbReference type="UniPathway" id="UPA00109">
    <property type="reaction ID" value="UER00181"/>
</dbReference>
<dbReference type="BioGRID-ORCS" id="35886">
    <property type="hits" value="0 hits in 1 CRISPR screen"/>
</dbReference>
<dbReference type="GenomeRNAi" id="35886"/>
<dbReference type="PRO" id="PR:P52029"/>
<dbReference type="Proteomes" id="UP000000803">
    <property type="component" value="Chromosome 2R"/>
</dbReference>
<dbReference type="Bgee" id="FBgn0003074">
    <property type="expression patterns" value="Expressed in adult hindgut (Drosophila) and 246 other cell types or tissues"/>
</dbReference>
<dbReference type="GO" id="GO:0005829">
    <property type="term" value="C:cytosol"/>
    <property type="evidence" value="ECO:0000314"/>
    <property type="project" value="FlyBase"/>
</dbReference>
<dbReference type="GO" id="GO:0097367">
    <property type="term" value="F:carbohydrate derivative binding"/>
    <property type="evidence" value="ECO:0007669"/>
    <property type="project" value="InterPro"/>
</dbReference>
<dbReference type="GO" id="GO:0004347">
    <property type="term" value="F:glucose-6-phosphate isomerase activity"/>
    <property type="evidence" value="ECO:0000314"/>
    <property type="project" value="FlyBase"/>
</dbReference>
<dbReference type="GO" id="GO:0048029">
    <property type="term" value="F:monosaccharide binding"/>
    <property type="evidence" value="ECO:0000318"/>
    <property type="project" value="GO_Central"/>
</dbReference>
<dbReference type="GO" id="GO:0061621">
    <property type="term" value="P:canonical glycolysis"/>
    <property type="evidence" value="ECO:0000315"/>
    <property type="project" value="FlyBase"/>
</dbReference>
<dbReference type="GO" id="GO:0006002">
    <property type="term" value="P:fructose 6-phosphate metabolic process"/>
    <property type="evidence" value="ECO:0000314"/>
    <property type="project" value="FlyBase"/>
</dbReference>
<dbReference type="GO" id="GO:0006094">
    <property type="term" value="P:gluconeogenesis"/>
    <property type="evidence" value="ECO:0000250"/>
    <property type="project" value="FlyBase"/>
</dbReference>
<dbReference type="GO" id="GO:0051156">
    <property type="term" value="P:glucose 6-phosphate metabolic process"/>
    <property type="evidence" value="ECO:0000314"/>
    <property type="project" value="FlyBase"/>
</dbReference>
<dbReference type="GO" id="GO:0042593">
    <property type="term" value="P:glucose homeostasis"/>
    <property type="evidence" value="ECO:0000315"/>
    <property type="project" value="FlyBase"/>
</dbReference>
<dbReference type="GO" id="GO:0006096">
    <property type="term" value="P:glycolytic process"/>
    <property type="evidence" value="ECO:0000318"/>
    <property type="project" value="GO_Central"/>
</dbReference>
<dbReference type="CDD" id="cd05015">
    <property type="entry name" value="SIS_PGI_1"/>
    <property type="match status" value="1"/>
</dbReference>
<dbReference type="CDD" id="cd05016">
    <property type="entry name" value="SIS_PGI_2"/>
    <property type="match status" value="1"/>
</dbReference>
<dbReference type="FunFam" id="1.10.1390.10:FF:000001">
    <property type="entry name" value="Glucose-6-phosphate isomerase"/>
    <property type="match status" value="1"/>
</dbReference>
<dbReference type="FunFam" id="3.40.50.10490:FF:000004">
    <property type="entry name" value="Glucose-6-phosphate isomerase"/>
    <property type="match status" value="1"/>
</dbReference>
<dbReference type="Gene3D" id="1.10.1390.10">
    <property type="match status" value="1"/>
</dbReference>
<dbReference type="Gene3D" id="3.40.50.10490">
    <property type="entry name" value="Glucose-6-phosphate isomerase like protein, domain 1"/>
    <property type="match status" value="2"/>
</dbReference>
<dbReference type="HAMAP" id="MF_00473">
    <property type="entry name" value="G6P_isomerase"/>
    <property type="match status" value="1"/>
</dbReference>
<dbReference type="InterPro" id="IPR001672">
    <property type="entry name" value="G6P_Isomerase"/>
</dbReference>
<dbReference type="InterPro" id="IPR023096">
    <property type="entry name" value="G6P_Isomerase_C"/>
</dbReference>
<dbReference type="InterPro" id="IPR018189">
    <property type="entry name" value="Phosphoglucose_isomerase_CS"/>
</dbReference>
<dbReference type="InterPro" id="IPR046348">
    <property type="entry name" value="SIS_dom_sf"/>
</dbReference>
<dbReference type="InterPro" id="IPR035476">
    <property type="entry name" value="SIS_PGI_1"/>
</dbReference>
<dbReference type="InterPro" id="IPR035482">
    <property type="entry name" value="SIS_PGI_2"/>
</dbReference>
<dbReference type="NCBIfam" id="NF001211">
    <property type="entry name" value="PRK00179.1"/>
    <property type="match status" value="1"/>
</dbReference>
<dbReference type="PANTHER" id="PTHR11469">
    <property type="entry name" value="GLUCOSE-6-PHOSPHATE ISOMERASE"/>
    <property type="match status" value="1"/>
</dbReference>
<dbReference type="PANTHER" id="PTHR11469:SF1">
    <property type="entry name" value="GLUCOSE-6-PHOSPHATE ISOMERASE"/>
    <property type="match status" value="1"/>
</dbReference>
<dbReference type="Pfam" id="PF00342">
    <property type="entry name" value="PGI"/>
    <property type="match status" value="1"/>
</dbReference>
<dbReference type="PRINTS" id="PR00662">
    <property type="entry name" value="G6PISOMERASE"/>
</dbReference>
<dbReference type="SUPFAM" id="SSF53697">
    <property type="entry name" value="SIS domain"/>
    <property type="match status" value="1"/>
</dbReference>
<dbReference type="PROSITE" id="PS00765">
    <property type="entry name" value="P_GLUCOSE_ISOMERASE_1"/>
    <property type="match status" value="1"/>
</dbReference>
<dbReference type="PROSITE" id="PS00174">
    <property type="entry name" value="P_GLUCOSE_ISOMERASE_2"/>
    <property type="match status" value="1"/>
</dbReference>
<dbReference type="PROSITE" id="PS51463">
    <property type="entry name" value="P_GLUCOSE_ISOMERASE_3"/>
    <property type="match status" value="1"/>
</dbReference>
<accession>P52029</accession>
<accession>A4UZ93</accession>
<accession>Q0E9F0</accession>
<accession>Q27868</accession>
<accession>Q27870</accession>
<accession>Q9V4Z8</accession>
<comment type="catalytic activity">
    <reaction>
        <text>alpha-D-glucose 6-phosphate = beta-D-fructose 6-phosphate</text>
        <dbReference type="Rhea" id="RHEA:11816"/>
        <dbReference type="ChEBI" id="CHEBI:57634"/>
        <dbReference type="ChEBI" id="CHEBI:58225"/>
        <dbReference type="EC" id="5.3.1.9"/>
    </reaction>
</comment>
<comment type="pathway">
    <text>Carbohydrate degradation; glycolysis; D-glyceraldehyde 3-phosphate and glycerone phosphate from D-glucose: step 2/4.</text>
</comment>
<comment type="subcellular location">
    <subcellularLocation>
        <location evidence="1">Cytoplasm</location>
    </subcellularLocation>
</comment>
<comment type="similarity">
    <text evidence="3">Belongs to the GPI family.</text>
</comment>
<sequence length="558" mass="62339">MAGPLPPLNQEAAFQKLQEYYDSKGKDLNIKDLFVKDSKRFSKYSLRLHTQNDGEILLDYSKNRINDEVWDLLLTLAKVRRVNAARDAMFSGQHINITENRAVLHTALRNRGTDPVLVDDKDVMPDVRAELAHMKEFTNMVISGVWRGCTGKQITDVVNIGIGGSDLGPLMVTEALKPYGKGLHSHFVSNIDGTHLAEVLKKVNYETTLFIVASKTFTTQETITNATSAKTWLLEHSKEPESVAKHFVALSTNKEKVTEFGIDSTNMFGFWDWVGGRYSLWSAIGLSICLSIGFENFEQLLDGAHFMDNHFKTTPFEKNAPVILALLGVWYSNFFKAETHALLPYDQYLHRFAAYFQQGDMESNGKFVSKSGKPVKYSTGPIVWGEPGTNGQHAFYQLIHQGTRLIPCDFIAPAQTHNPIAGGKHHKILLSNFLAQTEALMAGKTVDEARTELSKAGLCGNELDNLLPHKVFVGNRPTNSIVVKKVSPFTLGALIALYEHKIFVQGIIWDINSFDQWGVELGKQLAKAIEPELDHCNEVSTHDSSTNGLINFIKANWK</sequence>
<reference key="1">
    <citation type="submission" date="1994-01" db="EMBL/GenBank/DDBJ databases">
        <authorList>
            <person name="McDonald J.H."/>
            <person name="Kreitman M.E."/>
        </authorList>
    </citation>
    <scope>NUCLEOTIDE SEQUENCE [GENOMIC DNA]</scope>
    <scope>VARIANTS TYR-184; ILE-329 AND ALA-471</scope>
    <source>
        <strain>AF-F</strain>
        <strain>AF-S</strain>
        <strain>F1-1S</strain>
        <strain>F1-F</strain>
        <strain>FL-2S</strain>
        <strain>FR-F</strain>
        <strain>FR-S</strain>
        <strain>JA-F</strain>
        <strain>JA-S</strain>
        <strain>LW15</strain>
        <strain>LW8</strain>
        <strain>MW13</strain>
        <strain>MW17</strain>
        <strain>MW18</strain>
        <strain>WA-F</strain>
        <strain>WA-S</strain>
        <strain>ZW20</strain>
        <strain>ZW29</strain>
        <strain>ZW34</strain>
        <strain>ZW53</strain>
        <strain>ZW56</strain>
    </source>
</reference>
<reference key="2">
    <citation type="journal article" date="2000" name="Science">
        <title>The genome sequence of Drosophila melanogaster.</title>
        <authorList>
            <person name="Adams M.D."/>
            <person name="Celniker S.E."/>
            <person name="Holt R.A."/>
            <person name="Evans C.A."/>
            <person name="Gocayne J.D."/>
            <person name="Amanatides P.G."/>
            <person name="Scherer S.E."/>
            <person name="Li P.W."/>
            <person name="Hoskins R.A."/>
            <person name="Galle R.F."/>
            <person name="George R.A."/>
            <person name="Lewis S.E."/>
            <person name="Richards S."/>
            <person name="Ashburner M."/>
            <person name="Henderson S.N."/>
            <person name="Sutton G.G."/>
            <person name="Wortman J.R."/>
            <person name="Yandell M.D."/>
            <person name="Zhang Q."/>
            <person name="Chen L.X."/>
            <person name="Brandon R.C."/>
            <person name="Rogers Y.-H.C."/>
            <person name="Blazej R.G."/>
            <person name="Champe M."/>
            <person name="Pfeiffer B.D."/>
            <person name="Wan K.H."/>
            <person name="Doyle C."/>
            <person name="Baxter E.G."/>
            <person name="Helt G."/>
            <person name="Nelson C.R."/>
            <person name="Miklos G.L.G."/>
            <person name="Abril J.F."/>
            <person name="Agbayani A."/>
            <person name="An H.-J."/>
            <person name="Andrews-Pfannkoch C."/>
            <person name="Baldwin D."/>
            <person name="Ballew R.M."/>
            <person name="Basu A."/>
            <person name="Baxendale J."/>
            <person name="Bayraktaroglu L."/>
            <person name="Beasley E.M."/>
            <person name="Beeson K.Y."/>
            <person name="Benos P.V."/>
            <person name="Berman B.P."/>
            <person name="Bhandari D."/>
            <person name="Bolshakov S."/>
            <person name="Borkova D."/>
            <person name="Botchan M.R."/>
            <person name="Bouck J."/>
            <person name="Brokstein P."/>
            <person name="Brottier P."/>
            <person name="Burtis K.C."/>
            <person name="Busam D.A."/>
            <person name="Butler H."/>
            <person name="Cadieu E."/>
            <person name="Center A."/>
            <person name="Chandra I."/>
            <person name="Cherry J.M."/>
            <person name="Cawley S."/>
            <person name="Dahlke C."/>
            <person name="Davenport L.B."/>
            <person name="Davies P."/>
            <person name="de Pablos B."/>
            <person name="Delcher A."/>
            <person name="Deng Z."/>
            <person name="Mays A.D."/>
            <person name="Dew I."/>
            <person name="Dietz S.M."/>
            <person name="Dodson K."/>
            <person name="Doup L.E."/>
            <person name="Downes M."/>
            <person name="Dugan-Rocha S."/>
            <person name="Dunkov B.C."/>
            <person name="Dunn P."/>
            <person name="Durbin K.J."/>
            <person name="Evangelista C.C."/>
            <person name="Ferraz C."/>
            <person name="Ferriera S."/>
            <person name="Fleischmann W."/>
            <person name="Fosler C."/>
            <person name="Gabrielian A.E."/>
            <person name="Garg N.S."/>
            <person name="Gelbart W.M."/>
            <person name="Glasser K."/>
            <person name="Glodek A."/>
            <person name="Gong F."/>
            <person name="Gorrell J.H."/>
            <person name="Gu Z."/>
            <person name="Guan P."/>
            <person name="Harris M."/>
            <person name="Harris N.L."/>
            <person name="Harvey D.A."/>
            <person name="Heiman T.J."/>
            <person name="Hernandez J.R."/>
            <person name="Houck J."/>
            <person name="Hostin D."/>
            <person name="Houston K.A."/>
            <person name="Howland T.J."/>
            <person name="Wei M.-H."/>
            <person name="Ibegwam C."/>
            <person name="Jalali M."/>
            <person name="Kalush F."/>
            <person name="Karpen G.H."/>
            <person name="Ke Z."/>
            <person name="Kennison J.A."/>
            <person name="Ketchum K.A."/>
            <person name="Kimmel B.E."/>
            <person name="Kodira C.D."/>
            <person name="Kraft C.L."/>
            <person name="Kravitz S."/>
            <person name="Kulp D."/>
            <person name="Lai Z."/>
            <person name="Lasko P."/>
            <person name="Lei Y."/>
            <person name="Levitsky A.A."/>
            <person name="Li J.H."/>
            <person name="Li Z."/>
            <person name="Liang Y."/>
            <person name="Lin X."/>
            <person name="Liu X."/>
            <person name="Mattei B."/>
            <person name="McIntosh T.C."/>
            <person name="McLeod M.P."/>
            <person name="McPherson D."/>
            <person name="Merkulov G."/>
            <person name="Milshina N.V."/>
            <person name="Mobarry C."/>
            <person name="Morris J."/>
            <person name="Moshrefi A."/>
            <person name="Mount S.M."/>
            <person name="Moy M."/>
            <person name="Murphy B."/>
            <person name="Murphy L."/>
            <person name="Muzny D.M."/>
            <person name="Nelson D.L."/>
            <person name="Nelson D.R."/>
            <person name="Nelson K.A."/>
            <person name="Nixon K."/>
            <person name="Nusskern D.R."/>
            <person name="Pacleb J.M."/>
            <person name="Palazzolo M."/>
            <person name="Pittman G.S."/>
            <person name="Pan S."/>
            <person name="Pollard J."/>
            <person name="Puri V."/>
            <person name="Reese M.G."/>
            <person name="Reinert K."/>
            <person name="Remington K."/>
            <person name="Saunders R.D.C."/>
            <person name="Scheeler F."/>
            <person name="Shen H."/>
            <person name="Shue B.C."/>
            <person name="Siden-Kiamos I."/>
            <person name="Simpson M."/>
            <person name="Skupski M.P."/>
            <person name="Smith T.J."/>
            <person name="Spier E."/>
            <person name="Spradling A.C."/>
            <person name="Stapleton M."/>
            <person name="Strong R."/>
            <person name="Sun E."/>
            <person name="Svirskas R."/>
            <person name="Tector C."/>
            <person name="Turner R."/>
            <person name="Venter E."/>
            <person name="Wang A.H."/>
            <person name="Wang X."/>
            <person name="Wang Z.-Y."/>
            <person name="Wassarman D.A."/>
            <person name="Weinstock G.M."/>
            <person name="Weissenbach J."/>
            <person name="Williams S.M."/>
            <person name="Woodage T."/>
            <person name="Worley K.C."/>
            <person name="Wu D."/>
            <person name="Yang S."/>
            <person name="Yao Q.A."/>
            <person name="Ye J."/>
            <person name="Yeh R.-F."/>
            <person name="Zaveri J.S."/>
            <person name="Zhan M."/>
            <person name="Zhang G."/>
            <person name="Zhao Q."/>
            <person name="Zheng L."/>
            <person name="Zheng X.H."/>
            <person name="Zhong F.N."/>
            <person name="Zhong W."/>
            <person name="Zhou X."/>
            <person name="Zhu S.C."/>
            <person name="Zhu X."/>
            <person name="Smith H.O."/>
            <person name="Gibbs R.A."/>
            <person name="Myers E.W."/>
            <person name="Rubin G.M."/>
            <person name="Venter J.C."/>
        </authorList>
    </citation>
    <scope>NUCLEOTIDE SEQUENCE [LARGE SCALE GENOMIC DNA]</scope>
    <source>
        <strain>Berkeley</strain>
    </source>
</reference>
<reference key="3">
    <citation type="journal article" date="2002" name="Genome Biol.">
        <title>Annotation of the Drosophila melanogaster euchromatic genome: a systematic review.</title>
        <authorList>
            <person name="Misra S."/>
            <person name="Crosby M.A."/>
            <person name="Mungall C.J."/>
            <person name="Matthews B.B."/>
            <person name="Campbell K.S."/>
            <person name="Hradecky P."/>
            <person name="Huang Y."/>
            <person name="Kaminker J.S."/>
            <person name="Millburn G.H."/>
            <person name="Prochnik S.E."/>
            <person name="Smith C.D."/>
            <person name="Tupy J.L."/>
            <person name="Whitfield E.J."/>
            <person name="Bayraktaroglu L."/>
            <person name="Berman B.P."/>
            <person name="Bettencourt B.R."/>
            <person name="Celniker S.E."/>
            <person name="de Grey A.D.N.J."/>
            <person name="Drysdale R.A."/>
            <person name="Harris N.L."/>
            <person name="Richter J."/>
            <person name="Russo S."/>
            <person name="Schroeder A.J."/>
            <person name="Shu S.Q."/>
            <person name="Stapleton M."/>
            <person name="Yamada C."/>
            <person name="Ashburner M."/>
            <person name="Gelbart W.M."/>
            <person name="Rubin G.M."/>
            <person name="Lewis S.E."/>
        </authorList>
    </citation>
    <scope>GENOME REANNOTATION</scope>
    <source>
        <strain>Berkeley</strain>
    </source>
</reference>
<reference key="4">
    <citation type="journal article" date="2002" name="Genome Biol.">
        <title>A Drosophila full-length cDNA resource.</title>
        <authorList>
            <person name="Stapleton M."/>
            <person name="Carlson J.W."/>
            <person name="Brokstein P."/>
            <person name="Yu C."/>
            <person name="Champe M."/>
            <person name="George R.A."/>
            <person name="Guarin H."/>
            <person name="Kronmiller B."/>
            <person name="Pacleb J.M."/>
            <person name="Park S."/>
            <person name="Wan K.H."/>
            <person name="Rubin G.M."/>
            <person name="Celniker S.E."/>
        </authorList>
    </citation>
    <scope>NUCLEOTIDE SEQUENCE [LARGE SCALE MRNA]</scope>
    <source>
        <strain>Berkeley</strain>
        <tissue>Head</tissue>
    </source>
</reference>
<proteinExistence type="evidence at transcript level"/>